<gene>
    <name type="ordered locus">MT2037</name>
</gene>
<keyword id="KW-1015">Disulfide bond</keyword>
<keyword id="KW-0378">Hydrolase</keyword>
<keyword id="KW-1185">Reference proteome</keyword>
<keyword id="KW-0964">Secreted</keyword>
<keyword id="KW-0719">Serine esterase</keyword>
<keyword id="KW-0732">Signal</keyword>
<comment type="function">
    <text evidence="3">Shows esterase activity, with a preference for short- and medium-chain fatty acids.</text>
</comment>
<comment type="catalytic activity">
    <reaction evidence="3">
        <text>a fatty acid ester + H2O = an aliphatic alcohol + a fatty acid + H(+)</text>
        <dbReference type="Rhea" id="RHEA:59388"/>
        <dbReference type="ChEBI" id="CHEBI:2571"/>
        <dbReference type="ChEBI" id="CHEBI:15377"/>
        <dbReference type="ChEBI" id="CHEBI:15378"/>
        <dbReference type="ChEBI" id="CHEBI:28868"/>
        <dbReference type="ChEBI" id="CHEBI:35748"/>
    </reaction>
    <physiologicalReaction direction="left-to-right" evidence="3">
        <dbReference type="Rhea" id="RHEA:59389"/>
    </physiologicalReaction>
</comment>
<comment type="subcellular location">
    <subcellularLocation>
        <location evidence="3">Secreted</location>
    </subcellularLocation>
</comment>
<comment type="similarity">
    <text evidence="5">Belongs to the cutinase family.</text>
</comment>
<accession>P9WP42</accession>
<accession>L0TB60</accession>
<accession>P63879</accession>
<accession>Q10837</accession>
<feature type="signal peptide" evidence="4">
    <location>
        <begin position="1"/>
        <end position="32"/>
    </location>
</feature>
<feature type="chain" id="PRO_0000427017" description="Carboxylesterase Culp1">
    <location>
        <begin position="33"/>
        <end position="217"/>
    </location>
</feature>
<feature type="active site" description="Nucleophile" evidence="3">
    <location>
        <position position="118"/>
    </location>
</feature>
<feature type="active site" evidence="3">
    <location>
        <position position="181"/>
    </location>
</feature>
<feature type="active site" description="Proton donor/acceptor" evidence="3">
    <location>
        <position position="193"/>
    </location>
</feature>
<feature type="site" description="Transition state stabilizer" evidence="2">
    <location>
        <position position="119"/>
    </location>
</feature>
<feature type="disulfide bond" evidence="1">
    <location>
        <begin position="35"/>
        <end position="107"/>
    </location>
</feature>
<feature type="disulfide bond" evidence="1">
    <location>
        <begin position="177"/>
        <end position="184"/>
    </location>
</feature>
<name>CULP1_MYCTO</name>
<protein>
    <recommendedName>
        <fullName evidence="3">Carboxylesterase Culp1</fullName>
        <ecNumber evidence="3">3.1.1.-</ecNumber>
    </recommendedName>
    <alternativeName>
        <fullName evidence="3">Cutinase-like protein 1</fullName>
        <shortName evidence="3">Culp1</shortName>
    </alternativeName>
</protein>
<proteinExistence type="inferred from homology"/>
<evidence type="ECO:0000250" key="1">
    <source>
        <dbReference type="UniProtKB" id="O53581"/>
    </source>
</evidence>
<evidence type="ECO:0000250" key="2">
    <source>
        <dbReference type="UniProtKB" id="P00590"/>
    </source>
</evidence>
<evidence type="ECO:0000250" key="3">
    <source>
        <dbReference type="UniProtKB" id="P9WP43"/>
    </source>
</evidence>
<evidence type="ECO:0000255" key="4"/>
<evidence type="ECO:0000305" key="5"/>
<organism>
    <name type="scientific">Mycobacterium tuberculosis (strain CDC 1551 / Oshkosh)</name>
    <dbReference type="NCBI Taxonomy" id="83331"/>
    <lineage>
        <taxon>Bacteria</taxon>
        <taxon>Bacillati</taxon>
        <taxon>Actinomycetota</taxon>
        <taxon>Actinomycetes</taxon>
        <taxon>Mycobacteriales</taxon>
        <taxon>Mycobacteriaceae</taxon>
        <taxon>Mycobacterium</taxon>
        <taxon>Mycobacterium tuberculosis complex</taxon>
    </lineage>
</organism>
<reference key="1">
    <citation type="journal article" date="2002" name="J. Bacteriol.">
        <title>Whole-genome comparison of Mycobacterium tuberculosis clinical and laboratory strains.</title>
        <authorList>
            <person name="Fleischmann R.D."/>
            <person name="Alland D."/>
            <person name="Eisen J.A."/>
            <person name="Carpenter L."/>
            <person name="White O."/>
            <person name="Peterson J.D."/>
            <person name="DeBoy R.T."/>
            <person name="Dodson R.J."/>
            <person name="Gwinn M.L."/>
            <person name="Haft D.H."/>
            <person name="Hickey E.K."/>
            <person name="Kolonay J.F."/>
            <person name="Nelson W.C."/>
            <person name="Umayam L.A."/>
            <person name="Ermolaeva M.D."/>
            <person name="Salzberg S.L."/>
            <person name="Delcher A."/>
            <person name="Utterback T.R."/>
            <person name="Weidman J.F."/>
            <person name="Khouri H.M."/>
            <person name="Gill J."/>
            <person name="Mikula A."/>
            <person name="Bishai W."/>
            <person name="Jacobs W.R. Jr."/>
            <person name="Venter J.C."/>
            <person name="Fraser C.M."/>
        </authorList>
    </citation>
    <scope>NUCLEOTIDE SEQUENCE [LARGE SCALE GENOMIC DNA]</scope>
    <source>
        <strain>CDC 1551 / Oshkosh</strain>
    </source>
</reference>
<sequence length="217" mass="21782">MTPRSLVRIVGVVVATTLALVSAPAGGRAAHADPCSDIAVVFARGTHQASGLGDVGEAFVDSLTSQVGGRSIGVYAVNYPASDDYRASASNGSDDASAHIQRTVASCPNTRIVLGGYSQGATVIDLSTSAMPPAVADHVAAVALFGEPSSGFSSMLWGGGSLPTIGPLYSSKTINLCAPDDPICTGGGNIMAHVSYVQSGMTSQAATFAANRLDHAG</sequence>
<dbReference type="EC" id="3.1.1.-" evidence="3"/>
<dbReference type="EMBL" id="AE000516">
    <property type="protein sequence ID" value="AAK46312.1"/>
    <property type="molecule type" value="Genomic_DNA"/>
</dbReference>
<dbReference type="PIR" id="F70756">
    <property type="entry name" value="F70756"/>
</dbReference>
<dbReference type="SMR" id="P9WP42"/>
<dbReference type="ESTHER" id="myctu-cutas1">
    <property type="family name" value="Cutinase"/>
</dbReference>
<dbReference type="KEGG" id="mtc:MT2037"/>
<dbReference type="PATRIC" id="fig|83331.31.peg.2192"/>
<dbReference type="HOGENOM" id="CLU_040058_3_0_11"/>
<dbReference type="Proteomes" id="UP000001020">
    <property type="component" value="Chromosome"/>
</dbReference>
<dbReference type="GO" id="GO:0005576">
    <property type="term" value="C:extracellular region"/>
    <property type="evidence" value="ECO:0007669"/>
    <property type="project" value="UniProtKB-SubCell"/>
</dbReference>
<dbReference type="GO" id="GO:0052689">
    <property type="term" value="F:carboxylic ester hydrolase activity"/>
    <property type="evidence" value="ECO:0007669"/>
    <property type="project" value="UniProtKB-KW"/>
</dbReference>
<dbReference type="Gene3D" id="3.40.50.1820">
    <property type="entry name" value="alpha/beta hydrolase"/>
    <property type="match status" value="1"/>
</dbReference>
<dbReference type="InterPro" id="IPR029058">
    <property type="entry name" value="AB_hydrolase_fold"/>
</dbReference>
<dbReference type="InterPro" id="IPR000675">
    <property type="entry name" value="Cutinase/axe"/>
</dbReference>
<dbReference type="InterPro" id="IPR043580">
    <property type="entry name" value="CUTINASE_1"/>
</dbReference>
<dbReference type="InterPro" id="IPR043579">
    <property type="entry name" value="CUTINASE_2"/>
</dbReference>
<dbReference type="PANTHER" id="PTHR33630:SF9">
    <property type="entry name" value="CUTINASE 4"/>
    <property type="match status" value="1"/>
</dbReference>
<dbReference type="PANTHER" id="PTHR33630">
    <property type="entry name" value="CUTINASE RV1984C-RELATED-RELATED"/>
    <property type="match status" value="1"/>
</dbReference>
<dbReference type="Pfam" id="PF01083">
    <property type="entry name" value="Cutinase"/>
    <property type="match status" value="1"/>
</dbReference>
<dbReference type="SMART" id="SM01110">
    <property type="entry name" value="Cutinase"/>
    <property type="match status" value="1"/>
</dbReference>
<dbReference type="SUPFAM" id="SSF53474">
    <property type="entry name" value="alpha/beta-Hydrolases"/>
    <property type="match status" value="1"/>
</dbReference>
<dbReference type="PROSITE" id="PS00155">
    <property type="entry name" value="CUTINASE_1"/>
    <property type="match status" value="1"/>
</dbReference>
<dbReference type="PROSITE" id="PS00931">
    <property type="entry name" value="CUTINASE_2"/>
    <property type="match status" value="1"/>
</dbReference>